<sequence length="110" mass="13310">MLEKTTRMNYLFDFYQSLLTQKQRSYMSLYYLDDLSLGEIAEEFDVSRQAVYDNIKRTEAMLEEYEEKLVLLQKFQERQRLVAKLKQLISEEEHVNEEMKQVVEAIEKLD</sequence>
<feature type="chain" id="PRO_1000197587" description="UPF0122 protein BCG9842_B1298">
    <location>
        <begin position="1"/>
        <end position="110"/>
    </location>
</feature>
<comment type="function">
    <text evidence="1">Might take part in the signal recognition particle (SRP) pathway. This is inferred from the conservation of its genetic proximity to ftsY/ffh. May be a regulatory protein.</text>
</comment>
<comment type="similarity">
    <text evidence="1">Belongs to the UPF0122 family.</text>
</comment>
<reference key="1">
    <citation type="submission" date="2008-10" db="EMBL/GenBank/DDBJ databases">
        <title>Genome sequence of Bacillus cereus G9842.</title>
        <authorList>
            <person name="Dodson R.J."/>
            <person name="Durkin A.S."/>
            <person name="Rosovitz M.J."/>
            <person name="Rasko D.A."/>
            <person name="Hoffmaster A."/>
            <person name="Ravel J."/>
            <person name="Sutton G."/>
        </authorList>
    </citation>
    <scope>NUCLEOTIDE SEQUENCE [LARGE SCALE GENOMIC DNA]</scope>
    <source>
        <strain>G9842</strain>
    </source>
</reference>
<name>Y1298_BACC2</name>
<gene>
    <name type="ordered locus">BCG9842_B1298</name>
</gene>
<protein>
    <recommendedName>
        <fullName evidence="1">UPF0122 protein BCG9842_B1298</fullName>
    </recommendedName>
</protein>
<accession>B7IUK5</accession>
<evidence type="ECO:0000255" key="1">
    <source>
        <dbReference type="HAMAP-Rule" id="MF_00245"/>
    </source>
</evidence>
<dbReference type="EMBL" id="CP001186">
    <property type="protein sequence ID" value="ACK94272.1"/>
    <property type="molecule type" value="Genomic_DNA"/>
</dbReference>
<dbReference type="RefSeq" id="WP_000891062.1">
    <property type="nucleotide sequence ID" value="NC_011772.1"/>
</dbReference>
<dbReference type="SMR" id="B7IUK5"/>
<dbReference type="KEGG" id="bcg:BCG9842_B1298"/>
<dbReference type="HOGENOM" id="CLU_129218_1_0_9"/>
<dbReference type="Proteomes" id="UP000006744">
    <property type="component" value="Chromosome"/>
</dbReference>
<dbReference type="Gene3D" id="1.10.10.10">
    <property type="entry name" value="Winged helix-like DNA-binding domain superfamily/Winged helix DNA-binding domain"/>
    <property type="match status" value="1"/>
</dbReference>
<dbReference type="HAMAP" id="MF_00245">
    <property type="entry name" value="UPF0122"/>
    <property type="match status" value="1"/>
</dbReference>
<dbReference type="InterPro" id="IPR013324">
    <property type="entry name" value="RNA_pol_sigma_r3/r4-like"/>
</dbReference>
<dbReference type="InterPro" id="IPR007394">
    <property type="entry name" value="UPF0122"/>
</dbReference>
<dbReference type="InterPro" id="IPR054831">
    <property type="entry name" value="UPF0122_fam_protein"/>
</dbReference>
<dbReference type="InterPro" id="IPR036388">
    <property type="entry name" value="WH-like_DNA-bd_sf"/>
</dbReference>
<dbReference type="NCBIfam" id="NF001068">
    <property type="entry name" value="PRK00118.1-4"/>
    <property type="match status" value="1"/>
</dbReference>
<dbReference type="NCBIfam" id="NF001070">
    <property type="entry name" value="PRK00118.1-6"/>
    <property type="match status" value="1"/>
</dbReference>
<dbReference type="NCBIfam" id="NF045758">
    <property type="entry name" value="YlxM"/>
    <property type="match status" value="1"/>
</dbReference>
<dbReference type="PANTHER" id="PTHR40083">
    <property type="entry name" value="UPF0122 PROTEIN CBO2450/CLC_2298"/>
    <property type="match status" value="1"/>
</dbReference>
<dbReference type="PANTHER" id="PTHR40083:SF1">
    <property type="entry name" value="UPF0122 PROTEIN YLXM"/>
    <property type="match status" value="1"/>
</dbReference>
<dbReference type="Pfam" id="PF04297">
    <property type="entry name" value="UPF0122"/>
    <property type="match status" value="1"/>
</dbReference>
<dbReference type="SUPFAM" id="SSF88659">
    <property type="entry name" value="Sigma3 and sigma4 domains of RNA polymerase sigma factors"/>
    <property type="match status" value="1"/>
</dbReference>
<proteinExistence type="inferred from homology"/>
<organism>
    <name type="scientific">Bacillus cereus (strain G9842)</name>
    <dbReference type="NCBI Taxonomy" id="405531"/>
    <lineage>
        <taxon>Bacteria</taxon>
        <taxon>Bacillati</taxon>
        <taxon>Bacillota</taxon>
        <taxon>Bacilli</taxon>
        <taxon>Bacillales</taxon>
        <taxon>Bacillaceae</taxon>
        <taxon>Bacillus</taxon>
        <taxon>Bacillus cereus group</taxon>
    </lineage>
</organism>